<gene>
    <name evidence="1" type="primary">ispF</name>
    <name type="ordered locus">PSPTO_1560</name>
</gene>
<name>ISPF_PSESM</name>
<sequence length="157" mass="16749">MRIGHGYDVHRFAEGDFITLGGVRIAHGFGLLAHSDGDVLLHALSDALLGAAALGDIGKHFPDTDPQFKGADSRVLLRHVLKQIHGKGWKVGNVDATIVAQAPKMAPHIDAMRALIAEDLLVELDQVNVKATTTEKLGFTGREEGIAVHAVALLLRA</sequence>
<evidence type="ECO:0000255" key="1">
    <source>
        <dbReference type="HAMAP-Rule" id="MF_00107"/>
    </source>
</evidence>
<proteinExistence type="inferred from homology"/>
<feature type="chain" id="PRO_0000189497" description="2-C-methyl-D-erythritol 2,4-cyclodiphosphate synthase">
    <location>
        <begin position="1"/>
        <end position="157"/>
    </location>
</feature>
<feature type="binding site" evidence="1">
    <location>
        <begin position="8"/>
        <end position="10"/>
    </location>
    <ligand>
        <name>4-CDP-2-C-methyl-D-erythritol 2-phosphate</name>
        <dbReference type="ChEBI" id="CHEBI:57919"/>
    </ligand>
</feature>
<feature type="binding site" evidence="1">
    <location>
        <position position="8"/>
    </location>
    <ligand>
        <name>a divalent metal cation</name>
        <dbReference type="ChEBI" id="CHEBI:60240"/>
    </ligand>
</feature>
<feature type="binding site" evidence="1">
    <location>
        <position position="10"/>
    </location>
    <ligand>
        <name>a divalent metal cation</name>
        <dbReference type="ChEBI" id="CHEBI:60240"/>
    </ligand>
</feature>
<feature type="binding site" evidence="1">
    <location>
        <begin position="34"/>
        <end position="35"/>
    </location>
    <ligand>
        <name>4-CDP-2-C-methyl-D-erythritol 2-phosphate</name>
        <dbReference type="ChEBI" id="CHEBI:57919"/>
    </ligand>
</feature>
<feature type="binding site" evidence="1">
    <location>
        <position position="42"/>
    </location>
    <ligand>
        <name>a divalent metal cation</name>
        <dbReference type="ChEBI" id="CHEBI:60240"/>
    </ligand>
</feature>
<feature type="binding site" evidence="1">
    <location>
        <begin position="56"/>
        <end position="58"/>
    </location>
    <ligand>
        <name>4-CDP-2-C-methyl-D-erythritol 2-phosphate</name>
        <dbReference type="ChEBI" id="CHEBI:57919"/>
    </ligand>
</feature>
<feature type="binding site" evidence="1">
    <location>
        <begin position="61"/>
        <end position="65"/>
    </location>
    <ligand>
        <name>4-CDP-2-C-methyl-D-erythritol 2-phosphate</name>
        <dbReference type="ChEBI" id="CHEBI:57919"/>
    </ligand>
</feature>
<feature type="binding site" evidence="1">
    <location>
        <begin position="100"/>
        <end position="106"/>
    </location>
    <ligand>
        <name>4-CDP-2-C-methyl-D-erythritol 2-phosphate</name>
        <dbReference type="ChEBI" id="CHEBI:57919"/>
    </ligand>
</feature>
<feature type="binding site" evidence="1">
    <location>
        <begin position="132"/>
        <end position="135"/>
    </location>
    <ligand>
        <name>4-CDP-2-C-methyl-D-erythritol 2-phosphate</name>
        <dbReference type="ChEBI" id="CHEBI:57919"/>
    </ligand>
</feature>
<feature type="binding site" evidence="1">
    <location>
        <position position="139"/>
    </location>
    <ligand>
        <name>4-CDP-2-C-methyl-D-erythritol 2-phosphate</name>
        <dbReference type="ChEBI" id="CHEBI:57919"/>
    </ligand>
</feature>
<feature type="binding site" evidence="1">
    <location>
        <position position="142"/>
    </location>
    <ligand>
        <name>4-CDP-2-C-methyl-D-erythritol 2-phosphate</name>
        <dbReference type="ChEBI" id="CHEBI:57919"/>
    </ligand>
</feature>
<feature type="site" description="Transition state stabilizer" evidence="1">
    <location>
        <position position="34"/>
    </location>
</feature>
<feature type="site" description="Transition state stabilizer" evidence="1">
    <location>
        <position position="133"/>
    </location>
</feature>
<organism>
    <name type="scientific">Pseudomonas syringae pv. tomato (strain ATCC BAA-871 / DC3000)</name>
    <dbReference type="NCBI Taxonomy" id="223283"/>
    <lineage>
        <taxon>Bacteria</taxon>
        <taxon>Pseudomonadati</taxon>
        <taxon>Pseudomonadota</taxon>
        <taxon>Gammaproteobacteria</taxon>
        <taxon>Pseudomonadales</taxon>
        <taxon>Pseudomonadaceae</taxon>
        <taxon>Pseudomonas</taxon>
    </lineage>
</organism>
<accession>Q886L7</accession>
<dbReference type="EC" id="4.6.1.12" evidence="1"/>
<dbReference type="EMBL" id="AE016853">
    <property type="protein sequence ID" value="AAO55080.1"/>
    <property type="molecule type" value="Genomic_DNA"/>
</dbReference>
<dbReference type="RefSeq" id="NP_791385.1">
    <property type="nucleotide sequence ID" value="NC_004578.1"/>
</dbReference>
<dbReference type="RefSeq" id="WP_005766012.1">
    <property type="nucleotide sequence ID" value="NC_004578.1"/>
</dbReference>
<dbReference type="SMR" id="Q886L7"/>
<dbReference type="STRING" id="223283.PSPTO_1560"/>
<dbReference type="GeneID" id="1183197"/>
<dbReference type="KEGG" id="pst:PSPTO_1560"/>
<dbReference type="PATRIC" id="fig|223283.9.peg.1586"/>
<dbReference type="eggNOG" id="COG0245">
    <property type="taxonomic scope" value="Bacteria"/>
</dbReference>
<dbReference type="HOGENOM" id="CLU_084630_2_0_6"/>
<dbReference type="OrthoDB" id="9804336at2"/>
<dbReference type="PhylomeDB" id="Q886L7"/>
<dbReference type="UniPathway" id="UPA00056">
    <property type="reaction ID" value="UER00095"/>
</dbReference>
<dbReference type="Proteomes" id="UP000002515">
    <property type="component" value="Chromosome"/>
</dbReference>
<dbReference type="GO" id="GO:0008685">
    <property type="term" value="F:2-C-methyl-D-erythritol 2,4-cyclodiphosphate synthase activity"/>
    <property type="evidence" value="ECO:0007669"/>
    <property type="project" value="UniProtKB-UniRule"/>
</dbReference>
<dbReference type="GO" id="GO:0046872">
    <property type="term" value="F:metal ion binding"/>
    <property type="evidence" value="ECO:0007669"/>
    <property type="project" value="UniProtKB-KW"/>
</dbReference>
<dbReference type="GO" id="GO:0019288">
    <property type="term" value="P:isopentenyl diphosphate biosynthetic process, methylerythritol 4-phosphate pathway"/>
    <property type="evidence" value="ECO:0007669"/>
    <property type="project" value="UniProtKB-UniRule"/>
</dbReference>
<dbReference type="GO" id="GO:0016114">
    <property type="term" value="P:terpenoid biosynthetic process"/>
    <property type="evidence" value="ECO:0007669"/>
    <property type="project" value="InterPro"/>
</dbReference>
<dbReference type="CDD" id="cd00554">
    <property type="entry name" value="MECDP_synthase"/>
    <property type="match status" value="1"/>
</dbReference>
<dbReference type="FunFam" id="3.30.1330.50:FF:000001">
    <property type="entry name" value="2-C-methyl-D-erythritol 2,4-cyclodiphosphate synthase"/>
    <property type="match status" value="1"/>
</dbReference>
<dbReference type="Gene3D" id="3.30.1330.50">
    <property type="entry name" value="2-C-methyl-D-erythritol 2,4-cyclodiphosphate synthase"/>
    <property type="match status" value="1"/>
</dbReference>
<dbReference type="HAMAP" id="MF_00107">
    <property type="entry name" value="IspF"/>
    <property type="match status" value="1"/>
</dbReference>
<dbReference type="InterPro" id="IPR003526">
    <property type="entry name" value="MECDP_synthase"/>
</dbReference>
<dbReference type="InterPro" id="IPR020555">
    <property type="entry name" value="MECDP_synthase_CS"/>
</dbReference>
<dbReference type="InterPro" id="IPR036571">
    <property type="entry name" value="MECDP_synthase_sf"/>
</dbReference>
<dbReference type="NCBIfam" id="TIGR00151">
    <property type="entry name" value="ispF"/>
    <property type="match status" value="1"/>
</dbReference>
<dbReference type="PANTHER" id="PTHR43181">
    <property type="entry name" value="2-C-METHYL-D-ERYTHRITOL 2,4-CYCLODIPHOSPHATE SYNTHASE, CHLOROPLASTIC"/>
    <property type="match status" value="1"/>
</dbReference>
<dbReference type="PANTHER" id="PTHR43181:SF1">
    <property type="entry name" value="2-C-METHYL-D-ERYTHRITOL 2,4-CYCLODIPHOSPHATE SYNTHASE, CHLOROPLASTIC"/>
    <property type="match status" value="1"/>
</dbReference>
<dbReference type="Pfam" id="PF02542">
    <property type="entry name" value="YgbB"/>
    <property type="match status" value="1"/>
</dbReference>
<dbReference type="SUPFAM" id="SSF69765">
    <property type="entry name" value="IpsF-like"/>
    <property type="match status" value="1"/>
</dbReference>
<dbReference type="PROSITE" id="PS01350">
    <property type="entry name" value="ISPF"/>
    <property type="match status" value="1"/>
</dbReference>
<protein>
    <recommendedName>
        <fullName evidence="1">2-C-methyl-D-erythritol 2,4-cyclodiphosphate synthase</fullName>
        <shortName evidence="1">MECDP-synthase</shortName>
        <shortName evidence="1">MECPP-synthase</shortName>
        <shortName evidence="1">MECPS</shortName>
        <ecNumber evidence="1">4.6.1.12</ecNumber>
    </recommendedName>
</protein>
<reference key="1">
    <citation type="journal article" date="2003" name="Proc. Natl. Acad. Sci. U.S.A.">
        <title>The complete genome sequence of the Arabidopsis and tomato pathogen Pseudomonas syringae pv. tomato DC3000.</title>
        <authorList>
            <person name="Buell C.R."/>
            <person name="Joardar V."/>
            <person name="Lindeberg M."/>
            <person name="Selengut J."/>
            <person name="Paulsen I.T."/>
            <person name="Gwinn M.L."/>
            <person name="Dodson R.J."/>
            <person name="DeBoy R.T."/>
            <person name="Durkin A.S."/>
            <person name="Kolonay J.F."/>
            <person name="Madupu R."/>
            <person name="Daugherty S.C."/>
            <person name="Brinkac L.M."/>
            <person name="Beanan M.J."/>
            <person name="Haft D.H."/>
            <person name="Nelson W.C."/>
            <person name="Davidsen T.M."/>
            <person name="Zafar N."/>
            <person name="Zhou L."/>
            <person name="Liu J."/>
            <person name="Yuan Q."/>
            <person name="Khouri H.M."/>
            <person name="Fedorova N.B."/>
            <person name="Tran B."/>
            <person name="Russell D."/>
            <person name="Berry K.J."/>
            <person name="Utterback T.R."/>
            <person name="Van Aken S.E."/>
            <person name="Feldblyum T.V."/>
            <person name="D'Ascenzo M."/>
            <person name="Deng W.-L."/>
            <person name="Ramos A.R."/>
            <person name="Alfano J.R."/>
            <person name="Cartinhour S."/>
            <person name="Chatterjee A.K."/>
            <person name="Delaney T.P."/>
            <person name="Lazarowitz S.G."/>
            <person name="Martin G.B."/>
            <person name="Schneider D.J."/>
            <person name="Tang X."/>
            <person name="Bender C.L."/>
            <person name="White O."/>
            <person name="Fraser C.M."/>
            <person name="Collmer A."/>
        </authorList>
    </citation>
    <scope>NUCLEOTIDE SEQUENCE [LARGE SCALE GENOMIC DNA]</scope>
    <source>
        <strain>ATCC BAA-871 / DC3000</strain>
    </source>
</reference>
<keyword id="KW-0414">Isoprene biosynthesis</keyword>
<keyword id="KW-0456">Lyase</keyword>
<keyword id="KW-0479">Metal-binding</keyword>
<keyword id="KW-1185">Reference proteome</keyword>
<comment type="function">
    <text evidence="1">Involved in the biosynthesis of isopentenyl diphosphate (IPP) and dimethylallyl diphosphate (DMAPP), two major building blocks of isoprenoid compounds. Catalyzes the conversion of 4-diphosphocytidyl-2-C-methyl-D-erythritol 2-phosphate (CDP-ME2P) to 2-C-methyl-D-erythritol 2,4-cyclodiphosphate (ME-CPP) with a corresponding release of cytidine 5-monophosphate (CMP).</text>
</comment>
<comment type="catalytic activity">
    <reaction evidence="1">
        <text>4-CDP-2-C-methyl-D-erythritol 2-phosphate = 2-C-methyl-D-erythritol 2,4-cyclic diphosphate + CMP</text>
        <dbReference type="Rhea" id="RHEA:23864"/>
        <dbReference type="ChEBI" id="CHEBI:57919"/>
        <dbReference type="ChEBI" id="CHEBI:58483"/>
        <dbReference type="ChEBI" id="CHEBI:60377"/>
        <dbReference type="EC" id="4.6.1.12"/>
    </reaction>
</comment>
<comment type="cofactor">
    <cofactor evidence="1">
        <name>a divalent metal cation</name>
        <dbReference type="ChEBI" id="CHEBI:60240"/>
    </cofactor>
    <text evidence="1">Binds 1 divalent metal cation per subunit.</text>
</comment>
<comment type="pathway">
    <text evidence="1">Isoprenoid biosynthesis; isopentenyl diphosphate biosynthesis via DXP pathway; isopentenyl diphosphate from 1-deoxy-D-xylulose 5-phosphate: step 4/6.</text>
</comment>
<comment type="subunit">
    <text evidence="1">Homotrimer.</text>
</comment>
<comment type="similarity">
    <text evidence="1">Belongs to the IspF family.</text>
</comment>